<accession>A9L0R8</accession>
<proteinExistence type="inferred from homology"/>
<sequence>MGKIIGIDLGTTNSCVAVLDGGKARVLENAEGDRTTPSIIAYTDDETIVGSPAKRQAVTNPTNTFFAIKRLIGRRFKDDEVQRDVNIMPFKIIAADNGDAWVESRGNKMAPPQVSAEILKKMKKTAEDFLGEEVTEAVITVPAYFNDSQRQATKDAGRIAGLDVKRIINEPTAAALAYGIDKKQGDNIVAVYDLGGGTFDISIIEIDSNDGDQTFEVLATNGDTHLGGEDFDNRLINYLADEFKKEQGLDLRKDPLAMQRLKEAAEKAKIELSSTNHTEVNLPYITADATGPKHLVIKITRAKLESLVEDLIIRTLEPLKVALADADLSVTDINEVILVGGQTRMPKVQEAVTNFFGKEPRKDVNPDEAVAVGAAIQAGVLSGDVKDVLLLDVTPLSLGIETMGSVMTKLIEKNTTIPTKAQQVFSTADDNQSAVTIHVLQGERKQASANKSLGQFNLDGIEPAQRGQPQIEVMFDIDADGILHVSATDKKTGKKQNITIKASSGLSEEEVAQMVRDAEAHADEDKKFEELVQSRNQADGLVHATKKQVEEAGDALPSEDKEKIQAAMDAVDTAIKGNDKEAIEKATQELIEASAKLMEIAQAKSQAQGGDNADAGKQANATADDVVDAEFEEVKDDKK</sequence>
<organism>
    <name type="scientific">Shewanella baltica (strain OS195)</name>
    <dbReference type="NCBI Taxonomy" id="399599"/>
    <lineage>
        <taxon>Bacteria</taxon>
        <taxon>Pseudomonadati</taxon>
        <taxon>Pseudomonadota</taxon>
        <taxon>Gammaproteobacteria</taxon>
        <taxon>Alteromonadales</taxon>
        <taxon>Shewanellaceae</taxon>
        <taxon>Shewanella</taxon>
    </lineage>
</organism>
<keyword id="KW-0067">ATP-binding</keyword>
<keyword id="KW-0143">Chaperone</keyword>
<keyword id="KW-0547">Nucleotide-binding</keyword>
<keyword id="KW-0597">Phosphoprotein</keyword>
<keyword id="KW-0346">Stress response</keyword>
<name>DNAK_SHEB9</name>
<reference key="1">
    <citation type="submission" date="2007-11" db="EMBL/GenBank/DDBJ databases">
        <title>Complete sequence of chromosome of Shewanella baltica OS195.</title>
        <authorList>
            <consortium name="US DOE Joint Genome Institute"/>
            <person name="Copeland A."/>
            <person name="Lucas S."/>
            <person name="Lapidus A."/>
            <person name="Barry K."/>
            <person name="Glavina del Rio T."/>
            <person name="Dalin E."/>
            <person name="Tice H."/>
            <person name="Pitluck S."/>
            <person name="Chain P."/>
            <person name="Malfatti S."/>
            <person name="Shin M."/>
            <person name="Vergez L."/>
            <person name="Schmutz J."/>
            <person name="Larimer F."/>
            <person name="Land M."/>
            <person name="Hauser L."/>
            <person name="Kyrpides N."/>
            <person name="Kim E."/>
            <person name="Brettar I."/>
            <person name="Rodrigues J."/>
            <person name="Konstantinidis K."/>
            <person name="Klappenbach J."/>
            <person name="Hofle M."/>
            <person name="Tiedje J."/>
            <person name="Richardson P."/>
        </authorList>
    </citation>
    <scope>NUCLEOTIDE SEQUENCE [LARGE SCALE GENOMIC DNA]</scope>
    <source>
        <strain>OS195</strain>
    </source>
</reference>
<protein>
    <recommendedName>
        <fullName evidence="1">Chaperone protein DnaK</fullName>
    </recommendedName>
    <alternativeName>
        <fullName evidence="1">HSP70</fullName>
    </alternativeName>
    <alternativeName>
        <fullName evidence="1">Heat shock 70 kDa protein</fullName>
    </alternativeName>
    <alternativeName>
        <fullName evidence="1">Heat shock protein 70</fullName>
    </alternativeName>
</protein>
<dbReference type="EMBL" id="CP000891">
    <property type="protein sequence ID" value="ABX50699.1"/>
    <property type="molecule type" value="Genomic_DNA"/>
</dbReference>
<dbReference type="RefSeq" id="WP_006082794.1">
    <property type="nucleotide sequence ID" value="NC_009997.1"/>
</dbReference>
<dbReference type="SMR" id="A9L0R8"/>
<dbReference type="GeneID" id="11773577"/>
<dbReference type="KEGG" id="sbn:Sbal195_3537"/>
<dbReference type="HOGENOM" id="CLU_005965_2_1_6"/>
<dbReference type="Proteomes" id="UP000000770">
    <property type="component" value="Chromosome"/>
</dbReference>
<dbReference type="GO" id="GO:0005524">
    <property type="term" value="F:ATP binding"/>
    <property type="evidence" value="ECO:0007669"/>
    <property type="project" value="UniProtKB-UniRule"/>
</dbReference>
<dbReference type="GO" id="GO:0140662">
    <property type="term" value="F:ATP-dependent protein folding chaperone"/>
    <property type="evidence" value="ECO:0007669"/>
    <property type="project" value="InterPro"/>
</dbReference>
<dbReference type="GO" id="GO:0051082">
    <property type="term" value="F:unfolded protein binding"/>
    <property type="evidence" value="ECO:0007669"/>
    <property type="project" value="InterPro"/>
</dbReference>
<dbReference type="CDD" id="cd10234">
    <property type="entry name" value="ASKHA_NBD_HSP70_DnaK-like"/>
    <property type="match status" value="1"/>
</dbReference>
<dbReference type="FunFam" id="2.60.34.10:FF:000014">
    <property type="entry name" value="Chaperone protein DnaK HSP70"/>
    <property type="match status" value="1"/>
</dbReference>
<dbReference type="FunFam" id="1.20.1270.10:FF:000001">
    <property type="entry name" value="Molecular chaperone DnaK"/>
    <property type="match status" value="1"/>
</dbReference>
<dbReference type="FunFam" id="3.30.420.40:FF:000004">
    <property type="entry name" value="Molecular chaperone DnaK"/>
    <property type="match status" value="1"/>
</dbReference>
<dbReference type="FunFam" id="3.90.640.10:FF:000003">
    <property type="entry name" value="Molecular chaperone DnaK"/>
    <property type="match status" value="1"/>
</dbReference>
<dbReference type="Gene3D" id="1.20.1270.10">
    <property type="match status" value="1"/>
</dbReference>
<dbReference type="Gene3D" id="3.30.420.40">
    <property type="match status" value="2"/>
</dbReference>
<dbReference type="Gene3D" id="3.90.640.10">
    <property type="entry name" value="Actin, Chain A, domain 4"/>
    <property type="match status" value="1"/>
</dbReference>
<dbReference type="Gene3D" id="2.60.34.10">
    <property type="entry name" value="Substrate Binding Domain Of DNAk, Chain A, domain 1"/>
    <property type="match status" value="1"/>
</dbReference>
<dbReference type="HAMAP" id="MF_00332">
    <property type="entry name" value="DnaK"/>
    <property type="match status" value="1"/>
</dbReference>
<dbReference type="InterPro" id="IPR043129">
    <property type="entry name" value="ATPase_NBD"/>
</dbReference>
<dbReference type="InterPro" id="IPR012725">
    <property type="entry name" value="Chaperone_DnaK"/>
</dbReference>
<dbReference type="InterPro" id="IPR018181">
    <property type="entry name" value="Heat_shock_70_CS"/>
</dbReference>
<dbReference type="InterPro" id="IPR029048">
    <property type="entry name" value="HSP70_C_sf"/>
</dbReference>
<dbReference type="InterPro" id="IPR029047">
    <property type="entry name" value="HSP70_peptide-bd_sf"/>
</dbReference>
<dbReference type="InterPro" id="IPR013126">
    <property type="entry name" value="Hsp_70_fam"/>
</dbReference>
<dbReference type="NCBIfam" id="NF001413">
    <property type="entry name" value="PRK00290.1"/>
    <property type="match status" value="1"/>
</dbReference>
<dbReference type="NCBIfam" id="NF003520">
    <property type="entry name" value="PRK05183.1"/>
    <property type="match status" value="1"/>
</dbReference>
<dbReference type="NCBIfam" id="TIGR02350">
    <property type="entry name" value="prok_dnaK"/>
    <property type="match status" value="1"/>
</dbReference>
<dbReference type="PANTHER" id="PTHR19375">
    <property type="entry name" value="HEAT SHOCK PROTEIN 70KDA"/>
    <property type="match status" value="1"/>
</dbReference>
<dbReference type="Pfam" id="PF00012">
    <property type="entry name" value="HSP70"/>
    <property type="match status" value="1"/>
</dbReference>
<dbReference type="PRINTS" id="PR00301">
    <property type="entry name" value="HEATSHOCK70"/>
</dbReference>
<dbReference type="SUPFAM" id="SSF53067">
    <property type="entry name" value="Actin-like ATPase domain"/>
    <property type="match status" value="2"/>
</dbReference>
<dbReference type="SUPFAM" id="SSF100920">
    <property type="entry name" value="Heat shock protein 70kD (HSP70), peptide-binding domain"/>
    <property type="match status" value="1"/>
</dbReference>
<dbReference type="PROSITE" id="PS00297">
    <property type="entry name" value="HSP70_1"/>
    <property type="match status" value="1"/>
</dbReference>
<dbReference type="PROSITE" id="PS00329">
    <property type="entry name" value="HSP70_2"/>
    <property type="match status" value="1"/>
</dbReference>
<dbReference type="PROSITE" id="PS01036">
    <property type="entry name" value="HSP70_3"/>
    <property type="match status" value="1"/>
</dbReference>
<evidence type="ECO:0000255" key="1">
    <source>
        <dbReference type="HAMAP-Rule" id="MF_00332"/>
    </source>
</evidence>
<evidence type="ECO:0000256" key="2">
    <source>
        <dbReference type="SAM" id="MobiDB-lite"/>
    </source>
</evidence>
<feature type="chain" id="PRO_1000079244" description="Chaperone protein DnaK">
    <location>
        <begin position="1"/>
        <end position="639"/>
    </location>
</feature>
<feature type="region of interest" description="Disordered" evidence="2">
    <location>
        <begin position="602"/>
        <end position="639"/>
    </location>
</feature>
<feature type="compositionally biased region" description="Acidic residues" evidence="2">
    <location>
        <begin position="625"/>
        <end position="639"/>
    </location>
</feature>
<feature type="modified residue" description="Phosphothreonine; by autocatalysis" evidence="1">
    <location>
        <position position="198"/>
    </location>
</feature>
<gene>
    <name evidence="1" type="primary">dnaK</name>
    <name type="ordered locus">Sbal195_3537</name>
</gene>
<comment type="function">
    <text evidence="1">Acts as a chaperone.</text>
</comment>
<comment type="induction">
    <text evidence="1">By stress conditions e.g. heat shock.</text>
</comment>
<comment type="similarity">
    <text evidence="1">Belongs to the heat shock protein 70 family.</text>
</comment>